<keyword id="KW-1185">Reference proteome</keyword>
<keyword id="KW-0687">Ribonucleoprotein</keyword>
<keyword id="KW-0689">Ribosomal protein</keyword>
<comment type="function">
    <text evidence="1">Forms part of the ribosomal stalk which helps the ribosome interact with GTP-bound translation factors. Is thus essential for accurate translation.</text>
</comment>
<comment type="subunit">
    <text evidence="1">Homodimer. Part of the ribosomal stalk of the 50S ribosomal subunit. Forms a multimeric L10(L12)X complex, where L10 forms an elongated spine to which 2 to 4 L12 dimers bind in a sequential fashion. Binds GTP-bound translation factors.</text>
</comment>
<comment type="similarity">
    <text evidence="1">Belongs to the bacterial ribosomal protein bL12 family.</text>
</comment>
<name>RL7_WOLSU</name>
<sequence>MAITKEELLDYIGGLSVLELSELVKAFEEKFGVSAAPTVVAGAGAGVAAAAVEEKTEFDVILLDGGEKKINVIKVVRELTGLGLKEAKDAVEKTPTTIKEGANKDDAAAMKAKLEEAGAKVEIK</sequence>
<proteinExistence type="inferred from homology"/>
<dbReference type="EMBL" id="BX571658">
    <property type="protein sequence ID" value="CAE09606.1"/>
    <property type="molecule type" value="Genomic_DNA"/>
</dbReference>
<dbReference type="RefSeq" id="WP_011138406.1">
    <property type="nucleotide sequence ID" value="NC_005090.1"/>
</dbReference>
<dbReference type="SMR" id="Q7MA57"/>
<dbReference type="STRING" id="273121.WS0466"/>
<dbReference type="KEGG" id="wsu:WS0466"/>
<dbReference type="eggNOG" id="COG0222">
    <property type="taxonomic scope" value="Bacteria"/>
</dbReference>
<dbReference type="HOGENOM" id="CLU_086499_3_2_7"/>
<dbReference type="Proteomes" id="UP000000422">
    <property type="component" value="Chromosome"/>
</dbReference>
<dbReference type="GO" id="GO:0022625">
    <property type="term" value="C:cytosolic large ribosomal subunit"/>
    <property type="evidence" value="ECO:0007669"/>
    <property type="project" value="TreeGrafter"/>
</dbReference>
<dbReference type="GO" id="GO:0003729">
    <property type="term" value="F:mRNA binding"/>
    <property type="evidence" value="ECO:0007669"/>
    <property type="project" value="TreeGrafter"/>
</dbReference>
<dbReference type="GO" id="GO:0003735">
    <property type="term" value="F:structural constituent of ribosome"/>
    <property type="evidence" value="ECO:0007669"/>
    <property type="project" value="InterPro"/>
</dbReference>
<dbReference type="GO" id="GO:0006412">
    <property type="term" value="P:translation"/>
    <property type="evidence" value="ECO:0007669"/>
    <property type="project" value="UniProtKB-UniRule"/>
</dbReference>
<dbReference type="CDD" id="cd00387">
    <property type="entry name" value="Ribosomal_L7_L12"/>
    <property type="match status" value="1"/>
</dbReference>
<dbReference type="FunFam" id="3.30.1390.10:FF:000001">
    <property type="entry name" value="50S ribosomal protein L7/L12"/>
    <property type="match status" value="1"/>
</dbReference>
<dbReference type="Gene3D" id="3.30.1390.10">
    <property type="match status" value="1"/>
</dbReference>
<dbReference type="Gene3D" id="1.20.5.710">
    <property type="entry name" value="Single helix bin"/>
    <property type="match status" value="1"/>
</dbReference>
<dbReference type="HAMAP" id="MF_00368">
    <property type="entry name" value="Ribosomal_bL12"/>
    <property type="match status" value="1"/>
</dbReference>
<dbReference type="InterPro" id="IPR000206">
    <property type="entry name" value="Ribosomal_bL12"/>
</dbReference>
<dbReference type="InterPro" id="IPR013823">
    <property type="entry name" value="Ribosomal_bL12_C"/>
</dbReference>
<dbReference type="InterPro" id="IPR014719">
    <property type="entry name" value="Ribosomal_bL12_C/ClpS-like"/>
</dbReference>
<dbReference type="InterPro" id="IPR008932">
    <property type="entry name" value="Ribosomal_bL12_oligo"/>
</dbReference>
<dbReference type="InterPro" id="IPR036235">
    <property type="entry name" value="Ribosomal_bL12_oligo_N_sf"/>
</dbReference>
<dbReference type="NCBIfam" id="TIGR00855">
    <property type="entry name" value="L12"/>
    <property type="match status" value="1"/>
</dbReference>
<dbReference type="PANTHER" id="PTHR45987">
    <property type="entry name" value="39S RIBOSOMAL PROTEIN L12"/>
    <property type="match status" value="1"/>
</dbReference>
<dbReference type="PANTHER" id="PTHR45987:SF4">
    <property type="entry name" value="LARGE RIBOSOMAL SUBUNIT PROTEIN BL12M"/>
    <property type="match status" value="1"/>
</dbReference>
<dbReference type="Pfam" id="PF00542">
    <property type="entry name" value="Ribosomal_L12"/>
    <property type="match status" value="1"/>
</dbReference>
<dbReference type="Pfam" id="PF16320">
    <property type="entry name" value="Ribosomal_L12_N"/>
    <property type="match status" value="1"/>
</dbReference>
<dbReference type="SUPFAM" id="SSF54736">
    <property type="entry name" value="ClpS-like"/>
    <property type="match status" value="1"/>
</dbReference>
<dbReference type="SUPFAM" id="SSF48300">
    <property type="entry name" value="Ribosomal protein L7/12, oligomerisation (N-terminal) domain"/>
    <property type="match status" value="1"/>
</dbReference>
<accession>Q7MA57</accession>
<evidence type="ECO:0000255" key="1">
    <source>
        <dbReference type="HAMAP-Rule" id="MF_00368"/>
    </source>
</evidence>
<evidence type="ECO:0000305" key="2"/>
<protein>
    <recommendedName>
        <fullName evidence="1">Large ribosomal subunit protein bL12</fullName>
    </recommendedName>
    <alternativeName>
        <fullName evidence="2">50S ribosomal protein L7/L12</fullName>
    </alternativeName>
</protein>
<reference key="1">
    <citation type="journal article" date="2003" name="Proc. Natl. Acad. Sci. U.S.A.">
        <title>Complete genome sequence and analysis of Wolinella succinogenes.</title>
        <authorList>
            <person name="Baar C."/>
            <person name="Eppinger M."/>
            <person name="Raddatz G."/>
            <person name="Simon J."/>
            <person name="Lanz C."/>
            <person name="Klimmek O."/>
            <person name="Nandakumar R."/>
            <person name="Gross R."/>
            <person name="Rosinus A."/>
            <person name="Keller H."/>
            <person name="Jagtap P."/>
            <person name="Linke B."/>
            <person name="Meyer F."/>
            <person name="Lederer H."/>
            <person name="Schuster S.C."/>
        </authorList>
    </citation>
    <scope>NUCLEOTIDE SEQUENCE [LARGE SCALE GENOMIC DNA]</scope>
    <source>
        <strain>ATCC 29543 / DSM 1740 / CCUG 13145 / JCM 31913 / LMG 7466 / NCTC 11488 / FDC 602W</strain>
    </source>
</reference>
<gene>
    <name evidence="1" type="primary">rplL</name>
    <name type="ordered locus">WS0466</name>
</gene>
<organism>
    <name type="scientific">Wolinella succinogenes (strain ATCC 29543 / DSM 1740 / CCUG 13145 / JCM 31913 / LMG 7466 / NCTC 11488 / FDC 602W)</name>
    <name type="common">Vibrio succinogenes</name>
    <dbReference type="NCBI Taxonomy" id="273121"/>
    <lineage>
        <taxon>Bacteria</taxon>
        <taxon>Pseudomonadati</taxon>
        <taxon>Campylobacterota</taxon>
        <taxon>Epsilonproteobacteria</taxon>
        <taxon>Campylobacterales</taxon>
        <taxon>Helicobacteraceae</taxon>
        <taxon>Wolinella</taxon>
    </lineage>
</organism>
<feature type="chain" id="PRO_0000243526" description="Large ribosomal subunit protein bL12">
    <location>
        <begin position="1"/>
        <end position="124"/>
    </location>
</feature>